<organism>
    <name type="scientific">Nitrobacter hamburgensis (strain DSM 10229 / NCIMB 13809 / X14)</name>
    <dbReference type="NCBI Taxonomy" id="323097"/>
    <lineage>
        <taxon>Bacteria</taxon>
        <taxon>Pseudomonadati</taxon>
        <taxon>Pseudomonadota</taxon>
        <taxon>Alphaproteobacteria</taxon>
        <taxon>Hyphomicrobiales</taxon>
        <taxon>Nitrobacteraceae</taxon>
        <taxon>Nitrobacter</taxon>
    </lineage>
</organism>
<comment type="function">
    <text evidence="1">The RuvA-RuvB-RuvC complex processes Holliday junction (HJ) DNA during genetic recombination and DNA repair, while the RuvA-RuvB complex plays an important role in the rescue of blocked DNA replication forks via replication fork reversal (RFR). RuvA specifically binds to HJ cruciform DNA, conferring on it an open structure. The RuvB hexamer acts as an ATP-dependent pump, pulling dsDNA into and through the RuvAB complex. RuvB forms 2 homohexamers on either side of HJ DNA bound by 1 or 2 RuvA tetramers; 4 subunits per hexamer contact DNA at a time. Coordinated motions by a converter formed by DNA-disengaged RuvB subunits stimulates ATP hydrolysis and nucleotide exchange. Immobilization of the converter enables RuvB to convert the ATP-contained energy into a lever motion, pulling 2 nucleotides of DNA out of the RuvA tetramer per ATP hydrolyzed, thus driving DNA branch migration. The RuvB motors rotate together with the DNA substrate, which together with the progressing nucleotide cycle form the mechanistic basis for DNA recombination by continuous HJ branch migration. Branch migration allows RuvC to scan DNA until it finds its consensus sequence, where it cleaves and resolves cruciform DNA.</text>
</comment>
<comment type="catalytic activity">
    <reaction evidence="1">
        <text>ATP + H2O = ADP + phosphate + H(+)</text>
        <dbReference type="Rhea" id="RHEA:13065"/>
        <dbReference type="ChEBI" id="CHEBI:15377"/>
        <dbReference type="ChEBI" id="CHEBI:15378"/>
        <dbReference type="ChEBI" id="CHEBI:30616"/>
        <dbReference type="ChEBI" id="CHEBI:43474"/>
        <dbReference type="ChEBI" id="CHEBI:456216"/>
    </reaction>
</comment>
<comment type="subunit">
    <text evidence="1">Homohexamer. Forms an RuvA(8)-RuvB(12)-Holliday junction (HJ) complex. HJ DNA is sandwiched between 2 RuvA tetramers; dsDNA enters through RuvA and exits via RuvB. An RuvB hexamer assembles on each DNA strand where it exits the tetramer. Each RuvB hexamer is contacted by two RuvA subunits (via domain III) on 2 adjacent RuvB subunits; this complex drives branch migration. In the full resolvosome a probable DNA-RuvA(4)-RuvB(12)-RuvC(2) complex forms which resolves the HJ.</text>
</comment>
<comment type="subcellular location">
    <subcellularLocation>
        <location evidence="1">Cytoplasm</location>
    </subcellularLocation>
</comment>
<comment type="domain">
    <text evidence="1">Has 3 domains, the large (RuvB-L) and small ATPase (RuvB-S) domains and the C-terminal head (RuvB-H) domain. The head domain binds DNA, while the ATPase domains jointly bind ATP, ADP or are empty depending on the state of the subunit in the translocation cycle. During a single DNA translocation step the structure of each domain remains the same, but their relative positions change.</text>
</comment>
<comment type="similarity">
    <text evidence="1">Belongs to the RuvB family.</text>
</comment>
<accession>Q1QHP7</accession>
<feature type="chain" id="PRO_1000001434" description="Holliday junction branch migration complex subunit RuvB">
    <location>
        <begin position="1"/>
        <end position="347"/>
    </location>
</feature>
<feature type="region of interest" description="Large ATPase domain (RuvB-L)" evidence="1">
    <location>
        <begin position="1"/>
        <end position="183"/>
    </location>
</feature>
<feature type="region of interest" description="Small ATPAse domain (RuvB-S)" evidence="1">
    <location>
        <begin position="184"/>
        <end position="254"/>
    </location>
</feature>
<feature type="region of interest" description="Head domain (RuvB-H)" evidence="1">
    <location>
        <begin position="257"/>
        <end position="347"/>
    </location>
</feature>
<feature type="binding site" evidence="1">
    <location>
        <position position="22"/>
    </location>
    <ligand>
        <name>ATP</name>
        <dbReference type="ChEBI" id="CHEBI:30616"/>
    </ligand>
</feature>
<feature type="binding site" evidence="1">
    <location>
        <position position="23"/>
    </location>
    <ligand>
        <name>ATP</name>
        <dbReference type="ChEBI" id="CHEBI:30616"/>
    </ligand>
</feature>
<feature type="binding site" evidence="1">
    <location>
        <position position="64"/>
    </location>
    <ligand>
        <name>ATP</name>
        <dbReference type="ChEBI" id="CHEBI:30616"/>
    </ligand>
</feature>
<feature type="binding site" evidence="1">
    <location>
        <position position="67"/>
    </location>
    <ligand>
        <name>ATP</name>
        <dbReference type="ChEBI" id="CHEBI:30616"/>
    </ligand>
</feature>
<feature type="binding site" evidence="1">
    <location>
        <position position="68"/>
    </location>
    <ligand>
        <name>ATP</name>
        <dbReference type="ChEBI" id="CHEBI:30616"/>
    </ligand>
</feature>
<feature type="binding site" evidence="1">
    <location>
        <position position="68"/>
    </location>
    <ligand>
        <name>Mg(2+)</name>
        <dbReference type="ChEBI" id="CHEBI:18420"/>
    </ligand>
</feature>
<feature type="binding site" evidence="1">
    <location>
        <position position="69"/>
    </location>
    <ligand>
        <name>ATP</name>
        <dbReference type="ChEBI" id="CHEBI:30616"/>
    </ligand>
</feature>
<feature type="binding site" evidence="1">
    <location>
        <begin position="130"/>
        <end position="132"/>
    </location>
    <ligand>
        <name>ATP</name>
        <dbReference type="ChEBI" id="CHEBI:30616"/>
    </ligand>
</feature>
<feature type="binding site" evidence="1">
    <location>
        <position position="173"/>
    </location>
    <ligand>
        <name>ATP</name>
        <dbReference type="ChEBI" id="CHEBI:30616"/>
    </ligand>
</feature>
<feature type="binding site" evidence="1">
    <location>
        <position position="183"/>
    </location>
    <ligand>
        <name>ATP</name>
        <dbReference type="ChEBI" id="CHEBI:30616"/>
    </ligand>
</feature>
<feature type="binding site" evidence="1">
    <location>
        <position position="220"/>
    </location>
    <ligand>
        <name>ATP</name>
        <dbReference type="ChEBI" id="CHEBI:30616"/>
    </ligand>
</feature>
<feature type="binding site" evidence="1">
    <location>
        <position position="293"/>
    </location>
    <ligand>
        <name>DNA</name>
        <dbReference type="ChEBI" id="CHEBI:16991"/>
    </ligand>
</feature>
<feature type="binding site" evidence="1">
    <location>
        <position position="312"/>
    </location>
    <ligand>
        <name>DNA</name>
        <dbReference type="ChEBI" id="CHEBI:16991"/>
    </ligand>
</feature>
<feature type="binding site" evidence="1">
    <location>
        <position position="317"/>
    </location>
    <ligand>
        <name>DNA</name>
        <dbReference type="ChEBI" id="CHEBI:16991"/>
    </ligand>
</feature>
<sequence length="347" mass="37726">MTDVPRMVTPERRSDDVGDTVLRPQRLAEFVGQAQARANLQIFIDAARKRKEALDHVLFVGPPGLGKTTLAQIVARELGVGFRATSGPVIAKAGDLAALLTNLEERDVLFIDEIHRLSPAVEEVLYPAMEDFQLDLIIGEGPAARSVKIELSKFTLVGATTRAGLLTNPLRDRFGIPVRLNFYTVDELEKIVSRGARVLDVGMTADGANEIARRARGTPRIAGRLLRRVRDFASAADAASINRKIADHALGALEVDAAGLDAMDRRYLTTIALNYGGGPVGVETMAAALSEPRDAIEDIIEPFLIQCGYLQRTPRGRLLTSHAFRHLGLTEPSRDPSQFGLFGGEDE</sequence>
<reference key="1">
    <citation type="submission" date="2006-03" db="EMBL/GenBank/DDBJ databases">
        <title>Complete sequence of chromosome of Nitrobacter hamburgensis X14.</title>
        <authorList>
            <consortium name="US DOE Joint Genome Institute"/>
            <person name="Copeland A."/>
            <person name="Lucas S."/>
            <person name="Lapidus A."/>
            <person name="Barry K."/>
            <person name="Detter J.C."/>
            <person name="Glavina del Rio T."/>
            <person name="Hammon N."/>
            <person name="Israni S."/>
            <person name="Dalin E."/>
            <person name="Tice H."/>
            <person name="Pitluck S."/>
            <person name="Chain P."/>
            <person name="Malfatti S."/>
            <person name="Shin M."/>
            <person name="Vergez L."/>
            <person name="Schmutz J."/>
            <person name="Larimer F."/>
            <person name="Land M."/>
            <person name="Hauser L."/>
            <person name="Kyrpides N."/>
            <person name="Ivanova N."/>
            <person name="Ward B."/>
            <person name="Arp D."/>
            <person name="Klotz M."/>
            <person name="Stein L."/>
            <person name="O'Mullan G."/>
            <person name="Starkenburg S."/>
            <person name="Sayavedra L."/>
            <person name="Poret-Peterson A.T."/>
            <person name="Gentry M.E."/>
            <person name="Bruce D."/>
            <person name="Richardson P."/>
        </authorList>
    </citation>
    <scope>NUCLEOTIDE SEQUENCE [LARGE SCALE GENOMIC DNA]</scope>
    <source>
        <strain>DSM 10229 / NCIMB 13809 / X14</strain>
    </source>
</reference>
<evidence type="ECO:0000255" key="1">
    <source>
        <dbReference type="HAMAP-Rule" id="MF_00016"/>
    </source>
</evidence>
<gene>
    <name evidence="1" type="primary">ruvB</name>
    <name type="ordered locus">Nham_3521</name>
</gene>
<proteinExistence type="inferred from homology"/>
<protein>
    <recommendedName>
        <fullName evidence="1">Holliday junction branch migration complex subunit RuvB</fullName>
        <ecNumber evidence="1">3.6.4.-</ecNumber>
    </recommendedName>
</protein>
<dbReference type="EC" id="3.6.4.-" evidence="1"/>
<dbReference type="EMBL" id="CP000319">
    <property type="protein sequence ID" value="ABE64250.1"/>
    <property type="molecule type" value="Genomic_DNA"/>
</dbReference>
<dbReference type="RefSeq" id="WP_011511892.1">
    <property type="nucleotide sequence ID" value="NC_007964.1"/>
</dbReference>
<dbReference type="SMR" id="Q1QHP7"/>
<dbReference type="STRING" id="323097.Nham_3521"/>
<dbReference type="KEGG" id="nha:Nham_3521"/>
<dbReference type="eggNOG" id="COG2255">
    <property type="taxonomic scope" value="Bacteria"/>
</dbReference>
<dbReference type="HOGENOM" id="CLU_055599_1_0_5"/>
<dbReference type="OrthoDB" id="9804478at2"/>
<dbReference type="Proteomes" id="UP000001953">
    <property type="component" value="Chromosome"/>
</dbReference>
<dbReference type="GO" id="GO:0005737">
    <property type="term" value="C:cytoplasm"/>
    <property type="evidence" value="ECO:0007669"/>
    <property type="project" value="UniProtKB-SubCell"/>
</dbReference>
<dbReference type="GO" id="GO:0048476">
    <property type="term" value="C:Holliday junction resolvase complex"/>
    <property type="evidence" value="ECO:0007669"/>
    <property type="project" value="UniProtKB-UniRule"/>
</dbReference>
<dbReference type="GO" id="GO:0005524">
    <property type="term" value="F:ATP binding"/>
    <property type="evidence" value="ECO:0007669"/>
    <property type="project" value="UniProtKB-UniRule"/>
</dbReference>
<dbReference type="GO" id="GO:0016887">
    <property type="term" value="F:ATP hydrolysis activity"/>
    <property type="evidence" value="ECO:0007669"/>
    <property type="project" value="InterPro"/>
</dbReference>
<dbReference type="GO" id="GO:0000400">
    <property type="term" value="F:four-way junction DNA binding"/>
    <property type="evidence" value="ECO:0007669"/>
    <property type="project" value="UniProtKB-UniRule"/>
</dbReference>
<dbReference type="GO" id="GO:0009378">
    <property type="term" value="F:four-way junction helicase activity"/>
    <property type="evidence" value="ECO:0007669"/>
    <property type="project" value="InterPro"/>
</dbReference>
<dbReference type="GO" id="GO:0006310">
    <property type="term" value="P:DNA recombination"/>
    <property type="evidence" value="ECO:0007669"/>
    <property type="project" value="UniProtKB-UniRule"/>
</dbReference>
<dbReference type="GO" id="GO:0006281">
    <property type="term" value="P:DNA repair"/>
    <property type="evidence" value="ECO:0007669"/>
    <property type="project" value="UniProtKB-UniRule"/>
</dbReference>
<dbReference type="CDD" id="cd00009">
    <property type="entry name" value="AAA"/>
    <property type="match status" value="1"/>
</dbReference>
<dbReference type="Gene3D" id="1.10.8.60">
    <property type="match status" value="1"/>
</dbReference>
<dbReference type="Gene3D" id="3.40.50.300">
    <property type="entry name" value="P-loop containing nucleotide triphosphate hydrolases"/>
    <property type="match status" value="1"/>
</dbReference>
<dbReference type="Gene3D" id="1.10.10.10">
    <property type="entry name" value="Winged helix-like DNA-binding domain superfamily/Winged helix DNA-binding domain"/>
    <property type="match status" value="1"/>
</dbReference>
<dbReference type="HAMAP" id="MF_00016">
    <property type="entry name" value="DNA_HJ_migration_RuvB"/>
    <property type="match status" value="1"/>
</dbReference>
<dbReference type="InterPro" id="IPR003593">
    <property type="entry name" value="AAA+_ATPase"/>
</dbReference>
<dbReference type="InterPro" id="IPR041445">
    <property type="entry name" value="AAA_lid_4"/>
</dbReference>
<dbReference type="InterPro" id="IPR004605">
    <property type="entry name" value="DNA_helicase_Holl-junc_RuvB"/>
</dbReference>
<dbReference type="InterPro" id="IPR027417">
    <property type="entry name" value="P-loop_NTPase"/>
</dbReference>
<dbReference type="InterPro" id="IPR008824">
    <property type="entry name" value="RuvB-like_N"/>
</dbReference>
<dbReference type="InterPro" id="IPR008823">
    <property type="entry name" value="RuvB_C"/>
</dbReference>
<dbReference type="InterPro" id="IPR036388">
    <property type="entry name" value="WH-like_DNA-bd_sf"/>
</dbReference>
<dbReference type="InterPro" id="IPR036390">
    <property type="entry name" value="WH_DNA-bd_sf"/>
</dbReference>
<dbReference type="NCBIfam" id="NF000868">
    <property type="entry name" value="PRK00080.1"/>
    <property type="match status" value="1"/>
</dbReference>
<dbReference type="NCBIfam" id="TIGR00635">
    <property type="entry name" value="ruvB"/>
    <property type="match status" value="1"/>
</dbReference>
<dbReference type="PANTHER" id="PTHR42848">
    <property type="match status" value="1"/>
</dbReference>
<dbReference type="PANTHER" id="PTHR42848:SF1">
    <property type="entry name" value="HOLLIDAY JUNCTION BRANCH MIGRATION COMPLEX SUBUNIT RUVB"/>
    <property type="match status" value="1"/>
</dbReference>
<dbReference type="Pfam" id="PF17864">
    <property type="entry name" value="AAA_lid_4"/>
    <property type="match status" value="1"/>
</dbReference>
<dbReference type="Pfam" id="PF05491">
    <property type="entry name" value="RuvB_C"/>
    <property type="match status" value="1"/>
</dbReference>
<dbReference type="Pfam" id="PF05496">
    <property type="entry name" value="RuvB_N"/>
    <property type="match status" value="1"/>
</dbReference>
<dbReference type="SMART" id="SM00382">
    <property type="entry name" value="AAA"/>
    <property type="match status" value="1"/>
</dbReference>
<dbReference type="SUPFAM" id="SSF52540">
    <property type="entry name" value="P-loop containing nucleoside triphosphate hydrolases"/>
    <property type="match status" value="1"/>
</dbReference>
<dbReference type="SUPFAM" id="SSF46785">
    <property type="entry name" value="Winged helix' DNA-binding domain"/>
    <property type="match status" value="1"/>
</dbReference>
<keyword id="KW-0067">ATP-binding</keyword>
<keyword id="KW-0963">Cytoplasm</keyword>
<keyword id="KW-0227">DNA damage</keyword>
<keyword id="KW-0233">DNA recombination</keyword>
<keyword id="KW-0234">DNA repair</keyword>
<keyword id="KW-0238">DNA-binding</keyword>
<keyword id="KW-0378">Hydrolase</keyword>
<keyword id="KW-0547">Nucleotide-binding</keyword>
<keyword id="KW-1185">Reference proteome</keyword>
<name>RUVB_NITHX</name>